<feature type="chain" id="PRO_0000263543" description="Small ribosomal subunit protein uS12">
    <location>
        <begin position="1"/>
        <end position="124"/>
    </location>
</feature>
<feature type="modified residue" description="3-methylthioaspartic acid" evidence="1">
    <location>
        <position position="89"/>
    </location>
</feature>
<evidence type="ECO:0000250" key="1"/>
<evidence type="ECO:0000255" key="2">
    <source>
        <dbReference type="HAMAP-Rule" id="MF_00403"/>
    </source>
</evidence>
<evidence type="ECO:0000305" key="3"/>
<gene>
    <name evidence="2" type="primary">rpsL</name>
    <name type="ordered locus">BCI_0492</name>
</gene>
<organism>
    <name type="scientific">Baumannia cicadellinicola subsp. Homalodisca coagulata</name>
    <dbReference type="NCBI Taxonomy" id="374463"/>
    <lineage>
        <taxon>Bacteria</taxon>
        <taxon>Pseudomonadati</taxon>
        <taxon>Pseudomonadota</taxon>
        <taxon>Gammaproteobacteria</taxon>
        <taxon>Candidatus Palibaumannia</taxon>
    </lineage>
</organism>
<sequence>MVTINQLVRHPRSMKVAKSNVPALEGCPQKRGVCTRVYTTTPKKPNSALRKVCRVRLTNGFEVTSYIGGEGHNLQEHSVILIRGGRVKDLPGVRYHTLRGTLDCSGVKDRKKGRSKYGVKKQKV</sequence>
<comment type="function">
    <text evidence="2">With S4 and S5 plays an important role in translational accuracy.</text>
</comment>
<comment type="function">
    <text evidence="2">Interacts with and stabilizes bases of the 16S rRNA that are involved in tRNA selection in the A site and with the mRNA backbone. Located at the interface of the 30S and 50S subunits, it traverses the body of the 30S subunit contacting proteins on the other side and probably holding the rRNA structure together. The combined cluster of proteins S8, S12 and S17 appears to hold together the shoulder and platform of the 30S subunit.</text>
</comment>
<comment type="subunit">
    <text evidence="2">Part of the 30S ribosomal subunit. Contacts proteins S8 and S17. May interact with IF1 in the 30S initiation complex.</text>
</comment>
<comment type="similarity">
    <text evidence="2">Belongs to the universal ribosomal protein uS12 family.</text>
</comment>
<name>RS12_BAUCH</name>
<dbReference type="EMBL" id="CP000238">
    <property type="protein sequence ID" value="ABF13992.1"/>
    <property type="molecule type" value="Genomic_DNA"/>
</dbReference>
<dbReference type="RefSeq" id="WP_011520660.1">
    <property type="nucleotide sequence ID" value="NC_007984.1"/>
</dbReference>
<dbReference type="SMR" id="Q1LSY7"/>
<dbReference type="STRING" id="374463.BCI_0492"/>
<dbReference type="KEGG" id="bci:BCI_0492"/>
<dbReference type="HOGENOM" id="CLU_104295_1_2_6"/>
<dbReference type="OrthoDB" id="9802366at2"/>
<dbReference type="Proteomes" id="UP000002427">
    <property type="component" value="Chromosome"/>
</dbReference>
<dbReference type="GO" id="GO:0015935">
    <property type="term" value="C:small ribosomal subunit"/>
    <property type="evidence" value="ECO:0007669"/>
    <property type="project" value="InterPro"/>
</dbReference>
<dbReference type="GO" id="GO:0019843">
    <property type="term" value="F:rRNA binding"/>
    <property type="evidence" value="ECO:0007669"/>
    <property type="project" value="UniProtKB-UniRule"/>
</dbReference>
<dbReference type="GO" id="GO:0003735">
    <property type="term" value="F:structural constituent of ribosome"/>
    <property type="evidence" value="ECO:0007669"/>
    <property type="project" value="InterPro"/>
</dbReference>
<dbReference type="GO" id="GO:0000049">
    <property type="term" value="F:tRNA binding"/>
    <property type="evidence" value="ECO:0007669"/>
    <property type="project" value="UniProtKB-UniRule"/>
</dbReference>
<dbReference type="GO" id="GO:0006412">
    <property type="term" value="P:translation"/>
    <property type="evidence" value="ECO:0007669"/>
    <property type="project" value="UniProtKB-UniRule"/>
</dbReference>
<dbReference type="CDD" id="cd03368">
    <property type="entry name" value="Ribosomal_S12"/>
    <property type="match status" value="1"/>
</dbReference>
<dbReference type="FunFam" id="2.40.50.140:FF:000001">
    <property type="entry name" value="30S ribosomal protein S12"/>
    <property type="match status" value="1"/>
</dbReference>
<dbReference type="Gene3D" id="2.40.50.140">
    <property type="entry name" value="Nucleic acid-binding proteins"/>
    <property type="match status" value="1"/>
</dbReference>
<dbReference type="HAMAP" id="MF_00403_B">
    <property type="entry name" value="Ribosomal_uS12_B"/>
    <property type="match status" value="1"/>
</dbReference>
<dbReference type="InterPro" id="IPR012340">
    <property type="entry name" value="NA-bd_OB-fold"/>
</dbReference>
<dbReference type="InterPro" id="IPR006032">
    <property type="entry name" value="Ribosomal_uS12"/>
</dbReference>
<dbReference type="InterPro" id="IPR005679">
    <property type="entry name" value="Ribosomal_uS12_bac"/>
</dbReference>
<dbReference type="NCBIfam" id="TIGR00981">
    <property type="entry name" value="rpsL_bact"/>
    <property type="match status" value="1"/>
</dbReference>
<dbReference type="PANTHER" id="PTHR11652">
    <property type="entry name" value="30S RIBOSOMAL PROTEIN S12 FAMILY MEMBER"/>
    <property type="match status" value="1"/>
</dbReference>
<dbReference type="Pfam" id="PF00164">
    <property type="entry name" value="Ribosom_S12_S23"/>
    <property type="match status" value="1"/>
</dbReference>
<dbReference type="PIRSF" id="PIRSF002133">
    <property type="entry name" value="Ribosomal_S12/S23"/>
    <property type="match status" value="1"/>
</dbReference>
<dbReference type="PRINTS" id="PR01034">
    <property type="entry name" value="RIBOSOMALS12"/>
</dbReference>
<dbReference type="SUPFAM" id="SSF50249">
    <property type="entry name" value="Nucleic acid-binding proteins"/>
    <property type="match status" value="1"/>
</dbReference>
<dbReference type="PROSITE" id="PS00055">
    <property type="entry name" value="RIBOSOMAL_S12"/>
    <property type="match status" value="1"/>
</dbReference>
<protein>
    <recommendedName>
        <fullName evidence="2">Small ribosomal subunit protein uS12</fullName>
    </recommendedName>
    <alternativeName>
        <fullName evidence="3">30S ribosomal protein S12</fullName>
    </alternativeName>
</protein>
<keyword id="KW-0488">Methylation</keyword>
<keyword id="KW-1185">Reference proteome</keyword>
<keyword id="KW-0687">Ribonucleoprotein</keyword>
<keyword id="KW-0689">Ribosomal protein</keyword>
<keyword id="KW-0694">RNA-binding</keyword>
<keyword id="KW-0699">rRNA-binding</keyword>
<keyword id="KW-0820">tRNA-binding</keyword>
<accession>Q1LSY7</accession>
<reference key="1">
    <citation type="journal article" date="2006" name="PLoS Biol.">
        <title>Metabolic complementarity and genomics of the dual bacterial symbiosis of sharpshooters.</title>
        <authorList>
            <person name="Wu D."/>
            <person name="Daugherty S.C."/>
            <person name="Van Aken S.E."/>
            <person name="Pai G.H."/>
            <person name="Watkins K.L."/>
            <person name="Khouri H."/>
            <person name="Tallon L.J."/>
            <person name="Zaborsky J.M."/>
            <person name="Dunbar H.E."/>
            <person name="Tran P.L."/>
            <person name="Moran N.A."/>
            <person name="Eisen J.A."/>
        </authorList>
    </citation>
    <scope>NUCLEOTIDE SEQUENCE [LARGE SCALE GENOMIC DNA]</scope>
</reference>
<proteinExistence type="inferred from homology"/>